<comment type="function">
    <text evidence="1">Lyase that catalyzes the C1-decarboxylation of 4-hydroxy-3-methoxy-5-(all-trans-polyprenyl)benzoic acid into 2-methoxy-6-(all-trans-polyprenyl)phenol during ubiquinone biosynthesis.</text>
</comment>
<comment type="catalytic activity">
    <reaction evidence="1">
        <text>a 4-hydroxy-3-methoxy-5-(all-trans-polyprenyl)benzoate + H(+) = a 2-methoxy-6-(all-trans-polyprenyl)phenol + CO2</text>
        <dbReference type="Rhea" id="RHEA:81179"/>
        <dbReference type="Rhea" id="RHEA-COMP:9551"/>
        <dbReference type="Rhea" id="RHEA-COMP:10931"/>
        <dbReference type="ChEBI" id="CHEBI:15378"/>
        <dbReference type="ChEBI" id="CHEBI:16526"/>
        <dbReference type="ChEBI" id="CHEBI:62731"/>
        <dbReference type="ChEBI" id="CHEBI:84443"/>
        <dbReference type="EC" id="4.1.1.130"/>
    </reaction>
</comment>
<comment type="cofactor">
    <cofactor evidence="1">
        <name>Zn(2+)</name>
        <dbReference type="ChEBI" id="CHEBI:29105"/>
    </cofactor>
</comment>
<comment type="pathway">
    <text evidence="1">Cofactor biosynthesis; ubiquinone biosynthesis.</text>
</comment>
<comment type="subunit">
    <text evidence="1">Component of a multi-subunit COQ enzyme complex, composed of at least COQ3, COQ4, COQ5, COQ6, COQ7 and COQ9.</text>
</comment>
<comment type="subcellular location">
    <subcellularLocation>
        <location evidence="1">Mitochondrion inner membrane</location>
        <topology evidence="1">Peripheral membrane protein</topology>
        <orientation evidence="1">Matrix side</orientation>
    </subcellularLocation>
</comment>
<comment type="similarity">
    <text evidence="1">Belongs to the COQ4 family.</text>
</comment>
<dbReference type="EC" id="4.1.1.130" evidence="1"/>
<dbReference type="EMBL" id="CH476655">
    <property type="protein sequence ID" value="EDN03704.1"/>
    <property type="molecule type" value="Genomic_DNA"/>
</dbReference>
<dbReference type="SMR" id="A6QW12"/>
<dbReference type="STRING" id="339724.A6QW12"/>
<dbReference type="KEGG" id="aje:HCAG_01569"/>
<dbReference type="VEuPathDB" id="FungiDB:HCAG_01569"/>
<dbReference type="HOGENOM" id="CLU_061241_0_0_1"/>
<dbReference type="OMA" id="YYERHFH"/>
<dbReference type="OrthoDB" id="2572at299071"/>
<dbReference type="UniPathway" id="UPA00232"/>
<dbReference type="Proteomes" id="UP000009297">
    <property type="component" value="Unassembled WGS sequence"/>
</dbReference>
<dbReference type="GO" id="GO:0031314">
    <property type="term" value="C:extrinsic component of mitochondrial inner membrane"/>
    <property type="evidence" value="ECO:0007669"/>
    <property type="project" value="UniProtKB-UniRule"/>
</dbReference>
<dbReference type="GO" id="GO:0006744">
    <property type="term" value="P:ubiquinone biosynthetic process"/>
    <property type="evidence" value="ECO:0007669"/>
    <property type="project" value="UniProtKB-UniRule"/>
</dbReference>
<dbReference type="HAMAP" id="MF_03111">
    <property type="entry name" value="Coq4"/>
    <property type="match status" value="1"/>
</dbReference>
<dbReference type="InterPro" id="IPR007715">
    <property type="entry name" value="Coq4"/>
</dbReference>
<dbReference type="InterPro" id="IPR027540">
    <property type="entry name" value="Coq4_euk"/>
</dbReference>
<dbReference type="PANTHER" id="PTHR12922">
    <property type="entry name" value="UBIQUINONE BIOSYNTHESIS PROTEIN"/>
    <property type="match status" value="1"/>
</dbReference>
<dbReference type="PANTHER" id="PTHR12922:SF7">
    <property type="entry name" value="UBIQUINONE BIOSYNTHESIS PROTEIN COQ4 HOMOLOG, MITOCHONDRIAL"/>
    <property type="match status" value="1"/>
</dbReference>
<dbReference type="Pfam" id="PF05019">
    <property type="entry name" value="Coq4"/>
    <property type="match status" value="1"/>
</dbReference>
<gene>
    <name evidence="1" type="primary">COQ4</name>
    <name type="ORF">HCAG_01569</name>
</gene>
<evidence type="ECO:0000255" key="1">
    <source>
        <dbReference type="HAMAP-Rule" id="MF_03111"/>
    </source>
</evidence>
<organism>
    <name type="scientific">Ajellomyces capsulatus (strain NAm1 / WU24)</name>
    <name type="common">Darling's disease fungus</name>
    <name type="synonym">Histoplasma capsulatum</name>
    <dbReference type="NCBI Taxonomy" id="2059318"/>
    <lineage>
        <taxon>Eukaryota</taxon>
        <taxon>Fungi</taxon>
        <taxon>Dikarya</taxon>
        <taxon>Ascomycota</taxon>
        <taxon>Pezizomycotina</taxon>
        <taxon>Eurotiomycetes</taxon>
        <taxon>Eurotiomycetidae</taxon>
        <taxon>Onygenales</taxon>
        <taxon>Ajellomycetaceae</taxon>
        <taxon>Histoplasma</taxon>
    </lineage>
</organism>
<feature type="transit peptide" description="Mitochondrion" evidence="1">
    <location>
        <begin position="1"/>
        <end position="14"/>
    </location>
</feature>
<feature type="chain" id="PRO_0000388090" description="Ubiquinone biosynthesis protein COQ4, mitochondrial">
    <location>
        <begin position="15"/>
        <end position="277"/>
    </location>
</feature>
<feature type="binding site" evidence="1">
    <location>
        <position position="157"/>
    </location>
    <ligand>
        <name>Zn(2+)</name>
        <dbReference type="ChEBI" id="CHEBI:29105"/>
    </ligand>
</feature>
<feature type="binding site" evidence="1">
    <location>
        <position position="158"/>
    </location>
    <ligand>
        <name>Zn(2+)</name>
        <dbReference type="ChEBI" id="CHEBI:29105"/>
    </ligand>
</feature>
<feature type="binding site" evidence="1">
    <location>
        <position position="161"/>
    </location>
    <ligand>
        <name>Zn(2+)</name>
        <dbReference type="ChEBI" id="CHEBI:29105"/>
    </ligand>
</feature>
<feature type="binding site" evidence="1">
    <location>
        <position position="173"/>
    </location>
    <ligand>
        <name>Zn(2+)</name>
        <dbReference type="ChEBI" id="CHEBI:29105"/>
    </ligand>
</feature>
<name>COQ4_AJECN</name>
<proteinExistence type="inferred from homology"/>
<sequence length="277" mass="31869">MLTKRALRTTDPYRRVLSRGFSVLNRPSPNYPGHVPLTTLERGALAVGSAIGSLINPRRADLIAALGEATATPYFIYRLRDVMLSDPTGRRILRNKPSINSKTLSVEYLRSLSPNTVGRTYVDWLDREGVGPDTRAKVQYIDDKECAYVMQRYRECHDFYHAITGLPVVAEGEIALKTFEFANTLLPMTGLSMFAVMRLKPEEKERFWKLHLPWAVRNGLASKAVINVYWEEQLERDVDELRKELGIEKPVDLREIRKIMRRQKKMAEEAAKTKKRY</sequence>
<accession>A6QW12</accession>
<protein>
    <recommendedName>
        <fullName evidence="1">Ubiquinone biosynthesis protein COQ4, mitochondrial</fullName>
    </recommendedName>
    <alternativeName>
        <fullName>4-hydroxy-3-methoxy-5-polyprenylbenzoate decarboxylase</fullName>
        <ecNumber evidence="1">4.1.1.130</ecNumber>
    </alternativeName>
    <alternativeName>
        <fullName evidence="1">Coenzyme Q biosynthesis protein 4</fullName>
    </alternativeName>
</protein>
<reference key="1">
    <citation type="journal article" date="2009" name="Genome Res.">
        <title>Comparative genomic analyses of the human fungal pathogens Coccidioides and their relatives.</title>
        <authorList>
            <person name="Sharpton T.J."/>
            <person name="Stajich J.E."/>
            <person name="Rounsley S.D."/>
            <person name="Gardner M.J."/>
            <person name="Wortman J.R."/>
            <person name="Jordar V.S."/>
            <person name="Maiti R."/>
            <person name="Kodira C.D."/>
            <person name="Neafsey D.E."/>
            <person name="Zeng Q."/>
            <person name="Hung C.-Y."/>
            <person name="McMahan C."/>
            <person name="Muszewska A."/>
            <person name="Grynberg M."/>
            <person name="Mandel M.A."/>
            <person name="Kellner E.M."/>
            <person name="Barker B.M."/>
            <person name="Galgiani J.N."/>
            <person name="Orbach M.J."/>
            <person name="Kirkland T.N."/>
            <person name="Cole G.T."/>
            <person name="Henn M.R."/>
            <person name="Birren B.W."/>
            <person name="Taylor J.W."/>
        </authorList>
    </citation>
    <scope>NUCLEOTIDE SEQUENCE [LARGE SCALE GENOMIC DNA]</scope>
    <source>
        <strain>NAm1 / WU24</strain>
    </source>
</reference>
<keyword id="KW-0456">Lyase</keyword>
<keyword id="KW-0472">Membrane</keyword>
<keyword id="KW-0479">Metal-binding</keyword>
<keyword id="KW-0496">Mitochondrion</keyword>
<keyword id="KW-0999">Mitochondrion inner membrane</keyword>
<keyword id="KW-1185">Reference proteome</keyword>
<keyword id="KW-0809">Transit peptide</keyword>
<keyword id="KW-0831">Ubiquinone biosynthesis</keyword>
<keyword id="KW-0862">Zinc</keyword>